<name>MLAC1_METRA</name>
<comment type="function">
    <text evidence="5 6 7">Laccase; part of the Pks1 gene cluster that mediates the biosynthesis of an anthraquinone derivative pigment that contributes to conidial pigmentation that provides protection from UV radiation, heat and cold stress (PubMed:28447400, PubMed:29958281). The polyketide synthase Pks1 produces 1-acetyl-2,4,6,8-tetrahydroxy-9,10-anthraquinone though condensation of acetyl-CoA with malonyl-CoA (PubMed:25445307, PubMed:28447400, PubMed:29958281). The dehydratase EthD and the laccase Mlac1 further convert the anthraquinone derivative into the final conidial pigment (PubMed:28447400, PubMed:29958281).</text>
</comment>
<comment type="cofactor">
    <cofactor evidence="2">
        <name>Cu cation</name>
        <dbReference type="ChEBI" id="CHEBI:23378"/>
    </cofactor>
    <text evidence="2">Binds 4 Cu cations per monomer.</text>
</comment>
<comment type="pathway">
    <text evidence="6">Pigment biosynthesis.</text>
</comment>
<comment type="subcellular location">
    <subcellularLocation>
        <location evidence="1">Cell surface</location>
    </subcellularLocation>
</comment>
<comment type="induction">
    <text evidence="6">Highly expressed during conidiation (PubMed:28447400). A conserved conidiation regulatory pathway containing BrlA, AbaA and WetA regulates expression. During conidiation BlrA up-regulates AbaA, which in turn controls WetA. Moreover, the Hog1 MAPK regulates fungal conidiation by controlling the conidiation regulatory pathway, and that all three pigmentation genes Pks1, EthD and Mlac1 exercise feedback regulation of conidiation (PubMed:28447400).</text>
</comment>
<comment type="disruption phenotype">
    <text evidence="6">Reduces significantly the conidial yields.</text>
</comment>
<comment type="similarity">
    <text evidence="10">Belongs to the multicopper oxidase family.</text>
</comment>
<reference key="1">
    <citation type="journal article" date="2011" name="PLoS Genet.">
        <title>Genome sequencing and comparative transcriptomics of the model entomopathogenic fungi Metarhizium anisopliae and M. acridum.</title>
        <authorList>
            <person name="Gao Q."/>
            <person name="Jin K."/>
            <person name="Ying S.-H."/>
            <person name="Zhang Y."/>
            <person name="Xiao G."/>
            <person name="Shang Y."/>
            <person name="Duan Z."/>
            <person name="Hu X."/>
            <person name="Xie X.-Q."/>
            <person name="Zhou G."/>
            <person name="Peng G."/>
            <person name="Luo Z."/>
            <person name="Huang W."/>
            <person name="Wang B."/>
            <person name="Fang W."/>
            <person name="Wang S."/>
            <person name="Zhong Y."/>
            <person name="Ma L.-J."/>
            <person name="St Leger R.J."/>
            <person name="Zhao G.-P."/>
            <person name="Pei Y."/>
            <person name="Feng M.-G."/>
            <person name="Xia Y."/>
            <person name="Wang C."/>
        </authorList>
    </citation>
    <scope>NUCLEOTIDE SEQUENCE [LARGE SCALE GENOMIC DNA]</scope>
    <source>
        <strain>ARSEF 23 / ATCC MYA-3075</strain>
    </source>
</reference>
<reference key="2">
    <citation type="journal article" date="2014" name="Proc. Natl. Acad. Sci. U.S.A.">
        <title>Trajectory and genomic determinants of fungal-pathogen speciation and host adaptation.</title>
        <authorList>
            <person name="Hu X."/>
            <person name="Xiao G."/>
            <person name="Zheng P."/>
            <person name="Shang Y."/>
            <person name="Su Y."/>
            <person name="Zhang X."/>
            <person name="Liu X."/>
            <person name="Zhan S."/>
            <person name="St Leger R.J."/>
            <person name="Wang C."/>
        </authorList>
    </citation>
    <scope>GENOME REANNOTATION</scope>
    <source>
        <strain>ARSEF 23 / ATCC MYA-3075</strain>
    </source>
</reference>
<reference key="3">
    <citation type="journal article" date="2015" name="Fungal Genet. Biol.">
        <title>Biosynthesis of non-melanin pigment by a divergent polyketide synthase in Metarhizium robertsii.</title>
        <authorList>
            <person name="Chen Y."/>
            <person name="Feng P."/>
            <person name="Shang Y."/>
            <person name="Xu Y.J."/>
            <person name="Wang C."/>
        </authorList>
    </citation>
    <scope>FUNCTION</scope>
</reference>
<reference key="4">
    <citation type="journal article" date="2017" name="Environ. Microbiol.">
        <title>Genome-wide identification of pathogenicity, conidiation and colony sectorization genes in Metarhizium robertsii.</title>
        <authorList>
            <person name="Zeng G."/>
            <person name="Chen X."/>
            <person name="Zhang X."/>
            <person name="Zhang Q."/>
            <person name="Xu C."/>
            <person name="Mi W."/>
            <person name="Guo N."/>
            <person name="Zhao H."/>
            <person name="You Y."/>
            <person name="Dryburgh F.J."/>
            <person name="Bidochka M.J."/>
            <person name="St Leger R.J."/>
            <person name="Zhang L."/>
            <person name="Fang W."/>
        </authorList>
    </citation>
    <scope>IDENTIFICATION</scope>
    <scope>FUNCTION</scope>
    <scope>INDUCTION</scope>
    <scope>DISRUPTION PHENOTYPE</scope>
</reference>
<reference key="5">
    <citation type="journal article" date="2018" name="PLoS Genet.">
        <title>Duplication of a Pks gene cluster and subsequent functional diversification facilitate environmental adaptation in Metarhizium species.</title>
        <authorList>
            <person name="Zeng G."/>
            <person name="Zhang P."/>
            <person name="Zhang Q."/>
            <person name="Zhao H."/>
            <person name="Li Z."/>
            <person name="Zhang X."/>
            <person name="Wang C."/>
            <person name="Yin W.B."/>
            <person name="Fang W."/>
        </authorList>
    </citation>
    <scope>IDENTIFICATION</scope>
    <scope>FUNCTION</scope>
</reference>
<feature type="signal peptide" evidence="3">
    <location>
        <begin position="1"/>
        <end position="20"/>
    </location>
</feature>
<feature type="chain" id="PRO_5003239663" description="Laccase 1">
    <location>
        <begin position="21"/>
        <end position="613"/>
    </location>
</feature>
<feature type="domain" description="Plastocyanin-like 1" evidence="3">
    <location>
        <begin position="29"/>
        <end position="142"/>
    </location>
</feature>
<feature type="domain" description="Plastocyanin-like 2" evidence="3">
    <location>
        <begin position="171"/>
        <end position="359"/>
    </location>
</feature>
<feature type="domain" description="Plastocyanin-like 3" evidence="3">
    <location>
        <begin position="468"/>
        <end position="598"/>
    </location>
</feature>
<feature type="binding site" evidence="2">
    <location>
        <position position="78"/>
    </location>
    <ligand>
        <name>Cu cation</name>
        <dbReference type="ChEBI" id="CHEBI:23378"/>
        <label>1</label>
    </ligand>
</feature>
<feature type="binding site" evidence="2">
    <location>
        <position position="80"/>
    </location>
    <ligand>
        <name>Cu cation</name>
        <dbReference type="ChEBI" id="CHEBI:23378"/>
        <label>2</label>
    </ligand>
</feature>
<feature type="binding site" evidence="2">
    <location>
        <position position="122"/>
    </location>
    <ligand>
        <name>Cu cation</name>
        <dbReference type="ChEBI" id="CHEBI:23378"/>
        <label>2</label>
    </ligand>
</feature>
<feature type="binding site" evidence="2">
    <location>
        <position position="124"/>
    </location>
    <ligand>
        <name>Cu cation</name>
        <dbReference type="ChEBI" id="CHEBI:23378"/>
        <label>3</label>
    </ligand>
</feature>
<feature type="binding site" evidence="2">
    <location>
        <position position="506"/>
    </location>
    <ligand>
        <name>Cu cation</name>
        <dbReference type="ChEBI" id="CHEBI:23378"/>
        <label>4</label>
    </ligand>
</feature>
<feature type="binding site" evidence="2">
    <location>
        <position position="509"/>
    </location>
    <ligand>
        <name>Cu cation</name>
        <dbReference type="ChEBI" id="CHEBI:23378"/>
        <label>1</label>
    </ligand>
</feature>
<feature type="binding site" evidence="2">
    <location>
        <position position="509"/>
    </location>
    <ligand>
        <name>Cu cation</name>
        <dbReference type="ChEBI" id="CHEBI:23378"/>
        <label>4</label>
    </ligand>
</feature>
<feature type="binding site" evidence="2">
    <location>
        <position position="511"/>
    </location>
    <ligand>
        <name>Cu cation</name>
        <dbReference type="ChEBI" id="CHEBI:23378"/>
        <label>3</label>
    </ligand>
</feature>
<feature type="binding site" evidence="2">
    <location>
        <position position="580"/>
    </location>
    <ligand>
        <name>Cu cation</name>
        <dbReference type="ChEBI" id="CHEBI:23378"/>
        <label>3</label>
    </ligand>
</feature>
<feature type="binding site" evidence="2">
    <location>
        <position position="581"/>
    </location>
    <ligand>
        <name>Cu cation</name>
        <dbReference type="ChEBI" id="CHEBI:23378"/>
        <label>4</label>
    </ligand>
</feature>
<feature type="binding site" evidence="2">
    <location>
        <position position="582"/>
    </location>
    <ligand>
        <name>Cu cation</name>
        <dbReference type="ChEBI" id="CHEBI:23378"/>
        <label>2</label>
    </ligand>
</feature>
<feature type="binding site" evidence="2">
    <location>
        <position position="586"/>
    </location>
    <ligand>
        <name>Cu cation</name>
        <dbReference type="ChEBI" id="CHEBI:23378"/>
        <label>4</label>
    </ligand>
</feature>
<feature type="glycosylation site" description="N-linked (GlcNAc...) asparagine" evidence="4">
    <location>
        <position position="74"/>
    </location>
</feature>
<feature type="glycosylation site" description="N-linked (GlcNAc...) asparagine" evidence="4">
    <location>
        <position position="256"/>
    </location>
</feature>
<feature type="glycosylation site" description="N-linked (GlcNAc...) asparagine" evidence="4">
    <location>
        <position position="279"/>
    </location>
</feature>
<feature type="glycosylation site" description="N-linked (GlcNAc...) asparagine" evidence="4">
    <location>
        <position position="444"/>
    </location>
</feature>
<feature type="glycosylation site" description="N-linked (GlcNAc...) asparagine" evidence="4">
    <location>
        <position position="468"/>
    </location>
</feature>
<feature type="glycosylation site" description="N-linked (GlcNAc...) asparagine" evidence="4">
    <location>
        <position position="484"/>
    </location>
</feature>
<feature type="glycosylation site" description="N-linked (GlcNAc...) asparagine" evidence="4">
    <location>
        <position position="526"/>
    </location>
</feature>
<protein>
    <recommendedName>
        <fullName evidence="8">Laccase 1</fullName>
        <ecNumber evidence="11">1.10.3.-</ecNumber>
    </recommendedName>
    <alternativeName>
        <fullName evidence="8">Conidial pigment biosynthesis oxidase Mlac1</fullName>
    </alternativeName>
</protein>
<dbReference type="EC" id="1.10.3.-" evidence="11"/>
<dbReference type="EMBL" id="ADNJ02000010">
    <property type="protein sequence ID" value="EFY96686.2"/>
    <property type="molecule type" value="Genomic_DNA"/>
</dbReference>
<dbReference type="RefSeq" id="XP_007823936.2">
    <property type="nucleotide sequence ID" value="XM_007825745.2"/>
</dbReference>
<dbReference type="SMR" id="E9F648"/>
<dbReference type="GlyCosmos" id="E9F648">
    <property type="glycosylation" value="7 sites, No reported glycans"/>
</dbReference>
<dbReference type="GeneID" id="19262033"/>
<dbReference type="KEGG" id="maj:MAA_07747"/>
<dbReference type="HOGENOM" id="CLU_006504_5_0_1"/>
<dbReference type="OrthoDB" id="2121828at2759"/>
<dbReference type="Proteomes" id="UP000002498">
    <property type="component" value="Unassembled WGS sequence"/>
</dbReference>
<dbReference type="GO" id="GO:0009986">
    <property type="term" value="C:cell surface"/>
    <property type="evidence" value="ECO:0007669"/>
    <property type="project" value="UniProtKB-SubCell"/>
</dbReference>
<dbReference type="GO" id="GO:0005507">
    <property type="term" value="F:copper ion binding"/>
    <property type="evidence" value="ECO:0007669"/>
    <property type="project" value="InterPro"/>
</dbReference>
<dbReference type="GO" id="GO:0016491">
    <property type="term" value="F:oxidoreductase activity"/>
    <property type="evidence" value="ECO:0007669"/>
    <property type="project" value="UniProtKB-KW"/>
</dbReference>
<dbReference type="CDD" id="cd13850">
    <property type="entry name" value="CuRO_1_Abr2_like"/>
    <property type="match status" value="1"/>
</dbReference>
<dbReference type="CDD" id="cd13876">
    <property type="entry name" value="CuRO_2_Abr2_like"/>
    <property type="match status" value="1"/>
</dbReference>
<dbReference type="CDD" id="cd13898">
    <property type="entry name" value="CuRO_3_Abr2_like"/>
    <property type="match status" value="1"/>
</dbReference>
<dbReference type="FunFam" id="2.60.40.420:FF:000036">
    <property type="entry name" value="L-ascorbate oxidase"/>
    <property type="match status" value="1"/>
</dbReference>
<dbReference type="Gene3D" id="2.60.40.420">
    <property type="entry name" value="Cupredoxins - blue copper proteins"/>
    <property type="match status" value="3"/>
</dbReference>
<dbReference type="InterPro" id="IPR011707">
    <property type="entry name" value="Cu-oxidase-like_N"/>
</dbReference>
<dbReference type="InterPro" id="IPR001117">
    <property type="entry name" value="Cu-oxidase_2nd"/>
</dbReference>
<dbReference type="InterPro" id="IPR011706">
    <property type="entry name" value="Cu-oxidase_C"/>
</dbReference>
<dbReference type="InterPro" id="IPR045087">
    <property type="entry name" value="Cu-oxidase_fam"/>
</dbReference>
<dbReference type="InterPro" id="IPR033138">
    <property type="entry name" value="Cu_oxidase_CS"/>
</dbReference>
<dbReference type="InterPro" id="IPR002355">
    <property type="entry name" value="Cu_oxidase_Cu_BS"/>
</dbReference>
<dbReference type="InterPro" id="IPR008972">
    <property type="entry name" value="Cupredoxin"/>
</dbReference>
<dbReference type="PANTHER" id="PTHR11709:SF488">
    <property type="entry name" value="LACCASE-RELATED"/>
    <property type="match status" value="1"/>
</dbReference>
<dbReference type="PANTHER" id="PTHR11709">
    <property type="entry name" value="MULTI-COPPER OXIDASE"/>
    <property type="match status" value="1"/>
</dbReference>
<dbReference type="Pfam" id="PF00394">
    <property type="entry name" value="Cu-oxidase"/>
    <property type="match status" value="1"/>
</dbReference>
<dbReference type="Pfam" id="PF07731">
    <property type="entry name" value="Cu-oxidase_2"/>
    <property type="match status" value="1"/>
</dbReference>
<dbReference type="Pfam" id="PF07732">
    <property type="entry name" value="Cu-oxidase_3"/>
    <property type="match status" value="1"/>
</dbReference>
<dbReference type="SUPFAM" id="SSF49503">
    <property type="entry name" value="Cupredoxins"/>
    <property type="match status" value="3"/>
</dbReference>
<dbReference type="PROSITE" id="PS00079">
    <property type="entry name" value="MULTICOPPER_OXIDASE1"/>
    <property type="match status" value="1"/>
</dbReference>
<dbReference type="PROSITE" id="PS00080">
    <property type="entry name" value="MULTICOPPER_OXIDASE2"/>
    <property type="match status" value="1"/>
</dbReference>
<proteinExistence type="evidence at transcript level"/>
<gene>
    <name evidence="8" type="primary">Mlac1</name>
    <name evidence="9" type="synonym">Abr2</name>
    <name type="ORF">MAA_07747</name>
</gene>
<accession>E9F648</accession>
<organism>
    <name type="scientific">Metarhizium robertsii (strain ARSEF 23 / ATCC MYA-3075)</name>
    <name type="common">Metarhizium anisopliae (strain ARSEF 23)</name>
    <dbReference type="NCBI Taxonomy" id="655844"/>
    <lineage>
        <taxon>Eukaryota</taxon>
        <taxon>Fungi</taxon>
        <taxon>Dikarya</taxon>
        <taxon>Ascomycota</taxon>
        <taxon>Pezizomycotina</taxon>
        <taxon>Sordariomycetes</taxon>
        <taxon>Hypocreomycetidae</taxon>
        <taxon>Hypocreales</taxon>
        <taxon>Clavicipitaceae</taxon>
        <taxon>Metarhizium</taxon>
    </lineage>
</organism>
<keyword id="KW-0186">Copper</keyword>
<keyword id="KW-0325">Glycoprotein</keyword>
<keyword id="KW-0479">Metal-binding</keyword>
<keyword id="KW-0560">Oxidoreductase</keyword>
<keyword id="KW-0677">Repeat</keyword>
<keyword id="KW-0732">Signal</keyword>
<evidence type="ECO:0000250" key="1">
    <source>
        <dbReference type="UniProtKB" id="E9RBR0"/>
    </source>
</evidence>
<evidence type="ECO:0000250" key="2">
    <source>
        <dbReference type="UniProtKB" id="Q70KY3"/>
    </source>
</evidence>
<evidence type="ECO:0000255" key="3"/>
<evidence type="ECO:0000255" key="4">
    <source>
        <dbReference type="PROSITE-ProRule" id="PRU00498"/>
    </source>
</evidence>
<evidence type="ECO:0000269" key="5">
    <source>
    </source>
</evidence>
<evidence type="ECO:0000269" key="6">
    <source>
    </source>
</evidence>
<evidence type="ECO:0000269" key="7">
    <source>
    </source>
</evidence>
<evidence type="ECO:0000303" key="8">
    <source>
    </source>
</evidence>
<evidence type="ECO:0000303" key="9">
    <source>
    </source>
</evidence>
<evidence type="ECO:0000305" key="10"/>
<evidence type="ECO:0000305" key="11">
    <source>
    </source>
</evidence>
<sequence length="613" mass="69133">MSRFARLLLIVALFFTNAWAKTVKETLRITWKEGAPNGQARELIYTNGQFPSPTLVWDEDDDIEVTVYNEMAKNVTVHWHGLDQKDTPWSDGTPGLSQRPIQPGNKFVYRFKASPPGNHWYHSHEKMSLVDGLYGAIHIRPKGDRTGLWSQISQDKDDIKAMENAAYDPEYLVVSDWSQYTSEEYWKISTDSGLLVFCLDSILVNGKGEVYCPGQKFLQAELAPGLVEDAFPPGTEVSDKGCFPADLDQVQGGPWNITKRPDLIPPRVQEGCVASRHENATIVVDPSKNNGWVSMHFVAAATTAQITFSVDSHEFWLYEIDGNYVNPRKFVSAVMSAGETFSVMIKLDQEPGKYTMRIPNSGASQVLGGFAEMVYKGCEREEKAGKAYLSYGGNPTSPDVEKNSFFPWQLDTDHMSPWPPNKPRPGNADEEHLLVLGRVGAPYNYTMNTKYLYPVDFQNDDPLLFYPNATRDTENDGLVLRTKNGSWVDLILQVSTLPGDTASFEHFMHKHGSKTWRIGFGTGVWNYTSVEEAIQERPQDFNLETPGLRDTWITAFSIGGEAYWSVFRYFVDNPGPWLFHCHIELHLMGGMGIAILDGVDAWPEHIPEEYQLR</sequence>